<feature type="chain" id="PRO_0000377252" description="tRNA dimethylallyltransferase">
    <location>
        <begin position="1"/>
        <end position="302"/>
    </location>
</feature>
<feature type="binding site" evidence="1">
    <location>
        <begin position="21"/>
        <end position="28"/>
    </location>
    <ligand>
        <name>ATP</name>
        <dbReference type="ChEBI" id="CHEBI:30616"/>
    </ligand>
</feature>
<feature type="binding site" evidence="1">
    <location>
        <begin position="23"/>
        <end position="28"/>
    </location>
    <ligand>
        <name>substrate</name>
    </ligand>
</feature>
<feature type="site" description="Interaction with substrate tRNA" evidence="1">
    <location>
        <position position="113"/>
    </location>
</feature>
<feature type="site" description="Interaction with substrate tRNA" evidence="1">
    <location>
        <position position="135"/>
    </location>
</feature>
<accession>A1B964</accession>
<comment type="function">
    <text evidence="1">Catalyzes the transfer of a dimethylallyl group onto the adenine at position 37 in tRNAs that read codons beginning with uridine, leading to the formation of N6-(dimethylallyl)adenosine (i(6)A).</text>
</comment>
<comment type="catalytic activity">
    <reaction evidence="1">
        <text>adenosine(37) in tRNA + dimethylallyl diphosphate = N(6)-dimethylallyladenosine(37) in tRNA + diphosphate</text>
        <dbReference type="Rhea" id="RHEA:26482"/>
        <dbReference type="Rhea" id="RHEA-COMP:10162"/>
        <dbReference type="Rhea" id="RHEA-COMP:10375"/>
        <dbReference type="ChEBI" id="CHEBI:33019"/>
        <dbReference type="ChEBI" id="CHEBI:57623"/>
        <dbReference type="ChEBI" id="CHEBI:74411"/>
        <dbReference type="ChEBI" id="CHEBI:74415"/>
        <dbReference type="EC" id="2.5.1.75"/>
    </reaction>
</comment>
<comment type="cofactor">
    <cofactor evidence="1">
        <name>Mg(2+)</name>
        <dbReference type="ChEBI" id="CHEBI:18420"/>
    </cofactor>
</comment>
<comment type="subunit">
    <text evidence="1">Monomer.</text>
</comment>
<comment type="similarity">
    <text evidence="1">Belongs to the IPP transferase family.</text>
</comment>
<protein>
    <recommendedName>
        <fullName evidence="1">tRNA dimethylallyltransferase</fullName>
        <ecNumber evidence="1">2.5.1.75</ecNumber>
    </recommendedName>
    <alternativeName>
        <fullName evidence="1">Dimethylallyl diphosphate:tRNA dimethylallyltransferase</fullName>
        <shortName evidence="1">DMAPP:tRNA dimethylallyltransferase</shortName>
        <shortName evidence="1">DMATase</shortName>
    </alternativeName>
    <alternativeName>
        <fullName evidence="1">Isopentenyl-diphosphate:tRNA isopentenyltransferase</fullName>
        <shortName evidence="1">IPP transferase</shortName>
        <shortName evidence="1">IPPT</shortName>
        <shortName evidence="1">IPTase</shortName>
    </alternativeName>
</protein>
<gene>
    <name evidence="1" type="primary">miaA</name>
    <name type="ordered locus">Pden_3992</name>
</gene>
<keyword id="KW-0067">ATP-binding</keyword>
<keyword id="KW-0460">Magnesium</keyword>
<keyword id="KW-0547">Nucleotide-binding</keyword>
<keyword id="KW-1185">Reference proteome</keyword>
<keyword id="KW-0808">Transferase</keyword>
<keyword id="KW-0819">tRNA processing</keyword>
<reference key="1">
    <citation type="submission" date="2006-12" db="EMBL/GenBank/DDBJ databases">
        <title>Complete sequence of chromosome 2 of Paracoccus denitrificans PD1222.</title>
        <authorList>
            <person name="Copeland A."/>
            <person name="Lucas S."/>
            <person name="Lapidus A."/>
            <person name="Barry K."/>
            <person name="Detter J.C."/>
            <person name="Glavina del Rio T."/>
            <person name="Hammon N."/>
            <person name="Israni S."/>
            <person name="Dalin E."/>
            <person name="Tice H."/>
            <person name="Pitluck S."/>
            <person name="Munk A.C."/>
            <person name="Brettin T."/>
            <person name="Bruce D."/>
            <person name="Han C."/>
            <person name="Tapia R."/>
            <person name="Gilna P."/>
            <person name="Schmutz J."/>
            <person name="Larimer F."/>
            <person name="Land M."/>
            <person name="Hauser L."/>
            <person name="Kyrpides N."/>
            <person name="Lykidis A."/>
            <person name="Spiro S."/>
            <person name="Richardson D.J."/>
            <person name="Moir J.W.B."/>
            <person name="Ferguson S.J."/>
            <person name="van Spanning R.J.M."/>
            <person name="Richardson P."/>
        </authorList>
    </citation>
    <scope>NUCLEOTIDE SEQUENCE [LARGE SCALE GENOMIC DNA]</scope>
    <source>
        <strain>Pd 1222</strain>
    </source>
</reference>
<evidence type="ECO:0000255" key="1">
    <source>
        <dbReference type="HAMAP-Rule" id="MF_00185"/>
    </source>
</evidence>
<organism>
    <name type="scientific">Paracoccus denitrificans (strain Pd 1222)</name>
    <dbReference type="NCBI Taxonomy" id="318586"/>
    <lineage>
        <taxon>Bacteria</taxon>
        <taxon>Pseudomonadati</taxon>
        <taxon>Pseudomonadota</taxon>
        <taxon>Alphaproteobacteria</taxon>
        <taxon>Rhodobacterales</taxon>
        <taxon>Paracoccaceae</taxon>
        <taxon>Paracoccus</taxon>
    </lineage>
</organism>
<name>MIAA_PARDP</name>
<sequence length="302" mass="32960">MTLRHPILAELDPARPILIAGPTASGKSALALEIAEAQGGTVVNADALQVWSCWRLLTARPTAEDEARAPHALYGHVAPDRAYSVGAWLAEVAALMDKGCDSGRGRLIVTGGTGLYLNALSRGLAVIPPTPPEIRAQADQLVRQPGGLARMIEDLDSSTRARIDLRNPARVQRAWEVLTTTGRGIAAWQAETPPPLIDPAAAHLLVLNPDRDWLAERIARRFHLMLEQGALDEVRAMLPHWNPDALWAKAIGAPELVAHLQGRIDLDEAARRAVIATRQYAKAQRSFFRGRMRDWRWIGIGG</sequence>
<dbReference type="EC" id="2.5.1.75" evidence="1"/>
<dbReference type="EMBL" id="CP000490">
    <property type="protein sequence ID" value="ABL72058.1"/>
    <property type="molecule type" value="Genomic_DNA"/>
</dbReference>
<dbReference type="RefSeq" id="WP_011750226.1">
    <property type="nucleotide sequence ID" value="NC_008687.1"/>
</dbReference>
<dbReference type="SMR" id="A1B964"/>
<dbReference type="STRING" id="318586.Pden_3992"/>
<dbReference type="EnsemblBacteria" id="ABL72058">
    <property type="protein sequence ID" value="ABL72058"/>
    <property type="gene ID" value="Pden_3992"/>
</dbReference>
<dbReference type="GeneID" id="93453653"/>
<dbReference type="KEGG" id="pde:Pden_3992"/>
<dbReference type="eggNOG" id="COG0324">
    <property type="taxonomic scope" value="Bacteria"/>
</dbReference>
<dbReference type="HOGENOM" id="CLU_032616_0_1_5"/>
<dbReference type="OrthoDB" id="9776390at2"/>
<dbReference type="Proteomes" id="UP000000361">
    <property type="component" value="Chromosome 2"/>
</dbReference>
<dbReference type="GO" id="GO:0005524">
    <property type="term" value="F:ATP binding"/>
    <property type="evidence" value="ECO:0007669"/>
    <property type="project" value="UniProtKB-UniRule"/>
</dbReference>
<dbReference type="GO" id="GO:0052381">
    <property type="term" value="F:tRNA dimethylallyltransferase activity"/>
    <property type="evidence" value="ECO:0007669"/>
    <property type="project" value="UniProtKB-UniRule"/>
</dbReference>
<dbReference type="GO" id="GO:0006400">
    <property type="term" value="P:tRNA modification"/>
    <property type="evidence" value="ECO:0007669"/>
    <property type="project" value="TreeGrafter"/>
</dbReference>
<dbReference type="Gene3D" id="1.10.20.140">
    <property type="match status" value="1"/>
</dbReference>
<dbReference type="Gene3D" id="3.40.50.300">
    <property type="entry name" value="P-loop containing nucleotide triphosphate hydrolases"/>
    <property type="match status" value="1"/>
</dbReference>
<dbReference type="HAMAP" id="MF_00185">
    <property type="entry name" value="IPP_trans"/>
    <property type="match status" value="1"/>
</dbReference>
<dbReference type="InterPro" id="IPR039657">
    <property type="entry name" value="Dimethylallyltransferase"/>
</dbReference>
<dbReference type="InterPro" id="IPR018022">
    <property type="entry name" value="IPT"/>
</dbReference>
<dbReference type="InterPro" id="IPR027417">
    <property type="entry name" value="P-loop_NTPase"/>
</dbReference>
<dbReference type="NCBIfam" id="TIGR00174">
    <property type="entry name" value="miaA"/>
    <property type="match status" value="1"/>
</dbReference>
<dbReference type="PANTHER" id="PTHR11088">
    <property type="entry name" value="TRNA DIMETHYLALLYLTRANSFERASE"/>
    <property type="match status" value="1"/>
</dbReference>
<dbReference type="PANTHER" id="PTHR11088:SF60">
    <property type="entry name" value="TRNA DIMETHYLALLYLTRANSFERASE"/>
    <property type="match status" value="1"/>
</dbReference>
<dbReference type="Pfam" id="PF01715">
    <property type="entry name" value="IPPT"/>
    <property type="match status" value="1"/>
</dbReference>
<dbReference type="SUPFAM" id="SSF52540">
    <property type="entry name" value="P-loop containing nucleoside triphosphate hydrolases"/>
    <property type="match status" value="2"/>
</dbReference>
<proteinExistence type="inferred from homology"/>